<comment type="function">
    <text evidence="1">Catalyzes the last two sequential reactions in the de novo biosynthetic pathway for UDP-N-acetylglucosamine (UDP-GlcNAc). The C-terminal domain catalyzes the transfer of acetyl group from acetyl coenzyme A to glucosamine-1-phosphate (GlcN-1-P) to produce N-acetylglucosamine-1-phosphate (GlcNAc-1-P), which is converted into UDP-GlcNAc by the transfer of uridine 5-monophosphate (from uridine 5-triphosphate), a reaction catalyzed by the N-terminal domain.</text>
</comment>
<comment type="catalytic activity">
    <reaction evidence="1">
        <text>alpha-D-glucosamine 1-phosphate + acetyl-CoA = N-acetyl-alpha-D-glucosamine 1-phosphate + CoA + H(+)</text>
        <dbReference type="Rhea" id="RHEA:13725"/>
        <dbReference type="ChEBI" id="CHEBI:15378"/>
        <dbReference type="ChEBI" id="CHEBI:57287"/>
        <dbReference type="ChEBI" id="CHEBI:57288"/>
        <dbReference type="ChEBI" id="CHEBI:57776"/>
        <dbReference type="ChEBI" id="CHEBI:58516"/>
        <dbReference type="EC" id="2.3.1.157"/>
    </reaction>
</comment>
<comment type="catalytic activity">
    <reaction evidence="1">
        <text>N-acetyl-alpha-D-glucosamine 1-phosphate + UTP + H(+) = UDP-N-acetyl-alpha-D-glucosamine + diphosphate</text>
        <dbReference type="Rhea" id="RHEA:13509"/>
        <dbReference type="ChEBI" id="CHEBI:15378"/>
        <dbReference type="ChEBI" id="CHEBI:33019"/>
        <dbReference type="ChEBI" id="CHEBI:46398"/>
        <dbReference type="ChEBI" id="CHEBI:57705"/>
        <dbReference type="ChEBI" id="CHEBI:57776"/>
        <dbReference type="EC" id="2.7.7.23"/>
    </reaction>
</comment>
<comment type="cofactor">
    <cofactor evidence="1">
        <name>Mg(2+)</name>
        <dbReference type="ChEBI" id="CHEBI:18420"/>
    </cofactor>
    <text evidence="1">Binds 1 Mg(2+) ion per subunit.</text>
</comment>
<comment type="pathway">
    <text evidence="1">Nucleotide-sugar biosynthesis; UDP-N-acetyl-alpha-D-glucosamine biosynthesis; N-acetyl-alpha-D-glucosamine 1-phosphate from alpha-D-glucosamine 6-phosphate (route II): step 2/2.</text>
</comment>
<comment type="pathway">
    <text evidence="1">Nucleotide-sugar biosynthesis; UDP-N-acetyl-alpha-D-glucosamine biosynthesis; UDP-N-acetyl-alpha-D-glucosamine from N-acetyl-alpha-D-glucosamine 1-phosphate: step 1/1.</text>
</comment>
<comment type="pathway">
    <text evidence="1">Bacterial outer membrane biogenesis; LPS lipid A biosynthesis.</text>
</comment>
<comment type="subunit">
    <text evidence="1">Homotrimer.</text>
</comment>
<comment type="subcellular location">
    <subcellularLocation>
        <location evidence="1">Cytoplasm</location>
    </subcellularLocation>
</comment>
<comment type="similarity">
    <text evidence="1">In the N-terminal section; belongs to the N-acetylglucosamine-1-phosphate uridyltransferase family.</text>
</comment>
<comment type="similarity">
    <text evidence="1">In the C-terminal section; belongs to the transferase hexapeptide repeat family.</text>
</comment>
<sequence>MSLKVIILAAGKGTRMRSNLPKVLQPLAQKPLLSHVISTAQKLTNEPIITVIGHGAQRVVDVIGTDGIQYAEQLEQLGTGHAVVQGNPHYNDDDTVLILYGDVPLTQQNTLTDLLNLVDDIHPLALLTITLDNPSGYGRIVRNQHHLVQAIVEEKDASFEQKAVQEVNTGMMAVKGYYLKKWLGQLSNSNAQGEYYLTDIIEMCVQDGFEVHTTQPASEMEVLGVNNKSQLQSLERQYQAQLAEELMEQGVTVLDASRIDIRGDLTVGQDVTLDVNVIFEGTVVLEDHVSIGPNCVIKNAVIKSGTEIKSFSHIEDAQIGQNCEIGPYARLRPGTELSTGVKIGNFVETKKVQIGSGSKVNHLSYIGDTEMGAGVNIGAGTITCNYDGVNKHQTVIGDNVFIGSDSQLVAPVTIESDATIGAGSTITKDAPAGTLTLSRSKQLSIKGWQKPTKN</sequence>
<gene>
    <name evidence="1" type="primary">glmU</name>
    <name type="ordered locus">Tcr_2163</name>
</gene>
<accession>Q31DM2</accession>
<evidence type="ECO:0000255" key="1">
    <source>
        <dbReference type="HAMAP-Rule" id="MF_01631"/>
    </source>
</evidence>
<reference key="1">
    <citation type="journal article" date="2006" name="PLoS Biol.">
        <title>The genome of deep-sea vent chemolithoautotroph Thiomicrospira crunogena XCL-2.</title>
        <authorList>
            <person name="Scott K.M."/>
            <person name="Sievert S.M."/>
            <person name="Abril F.N."/>
            <person name="Ball L.A."/>
            <person name="Barrett C.J."/>
            <person name="Blake R.A."/>
            <person name="Boller A.J."/>
            <person name="Chain P.S.G."/>
            <person name="Clark J.A."/>
            <person name="Davis C.R."/>
            <person name="Detter C."/>
            <person name="Do K.F."/>
            <person name="Dobrinski K.P."/>
            <person name="Faza B.I."/>
            <person name="Fitzpatrick K.A."/>
            <person name="Freyermuth S.K."/>
            <person name="Harmer T.L."/>
            <person name="Hauser L.J."/>
            <person name="Huegler M."/>
            <person name="Kerfeld C.A."/>
            <person name="Klotz M.G."/>
            <person name="Kong W.W."/>
            <person name="Land M."/>
            <person name="Lapidus A."/>
            <person name="Larimer F.W."/>
            <person name="Longo D.L."/>
            <person name="Lucas S."/>
            <person name="Malfatti S.A."/>
            <person name="Massey S.E."/>
            <person name="Martin D.D."/>
            <person name="McCuddin Z."/>
            <person name="Meyer F."/>
            <person name="Moore J.L."/>
            <person name="Ocampo L.H. Jr."/>
            <person name="Paul J.H."/>
            <person name="Paulsen I.T."/>
            <person name="Reep D.K."/>
            <person name="Ren Q."/>
            <person name="Ross R.L."/>
            <person name="Sato P.Y."/>
            <person name="Thomas P."/>
            <person name="Tinkham L.E."/>
            <person name="Zeruth G.T."/>
        </authorList>
    </citation>
    <scope>NUCLEOTIDE SEQUENCE [LARGE SCALE GENOMIC DNA]</scope>
    <source>
        <strain>DSM 25203 / XCL-2</strain>
    </source>
</reference>
<dbReference type="EC" id="2.7.7.23" evidence="1"/>
<dbReference type="EC" id="2.3.1.157" evidence="1"/>
<dbReference type="EMBL" id="CP000109">
    <property type="protein sequence ID" value="ABB42751.1"/>
    <property type="molecule type" value="Genomic_DNA"/>
</dbReference>
<dbReference type="SMR" id="Q31DM2"/>
<dbReference type="STRING" id="317025.Tcr_2163"/>
<dbReference type="KEGG" id="tcx:Tcr_2163"/>
<dbReference type="eggNOG" id="COG1207">
    <property type="taxonomic scope" value="Bacteria"/>
</dbReference>
<dbReference type="HOGENOM" id="CLU_029499_15_2_6"/>
<dbReference type="OrthoDB" id="9775031at2"/>
<dbReference type="UniPathway" id="UPA00113">
    <property type="reaction ID" value="UER00532"/>
</dbReference>
<dbReference type="UniPathway" id="UPA00113">
    <property type="reaction ID" value="UER00533"/>
</dbReference>
<dbReference type="UniPathway" id="UPA00973"/>
<dbReference type="GO" id="GO:0005737">
    <property type="term" value="C:cytoplasm"/>
    <property type="evidence" value="ECO:0007669"/>
    <property type="project" value="UniProtKB-SubCell"/>
</dbReference>
<dbReference type="GO" id="GO:0016020">
    <property type="term" value="C:membrane"/>
    <property type="evidence" value="ECO:0007669"/>
    <property type="project" value="GOC"/>
</dbReference>
<dbReference type="GO" id="GO:0019134">
    <property type="term" value="F:glucosamine-1-phosphate N-acetyltransferase activity"/>
    <property type="evidence" value="ECO:0007669"/>
    <property type="project" value="UniProtKB-UniRule"/>
</dbReference>
<dbReference type="GO" id="GO:0000287">
    <property type="term" value="F:magnesium ion binding"/>
    <property type="evidence" value="ECO:0007669"/>
    <property type="project" value="UniProtKB-UniRule"/>
</dbReference>
<dbReference type="GO" id="GO:0003977">
    <property type="term" value="F:UDP-N-acetylglucosamine diphosphorylase activity"/>
    <property type="evidence" value="ECO:0007669"/>
    <property type="project" value="UniProtKB-UniRule"/>
</dbReference>
<dbReference type="GO" id="GO:0000902">
    <property type="term" value="P:cell morphogenesis"/>
    <property type="evidence" value="ECO:0007669"/>
    <property type="project" value="UniProtKB-UniRule"/>
</dbReference>
<dbReference type="GO" id="GO:0071555">
    <property type="term" value="P:cell wall organization"/>
    <property type="evidence" value="ECO:0007669"/>
    <property type="project" value="UniProtKB-KW"/>
</dbReference>
<dbReference type="GO" id="GO:0009245">
    <property type="term" value="P:lipid A biosynthetic process"/>
    <property type="evidence" value="ECO:0007669"/>
    <property type="project" value="UniProtKB-UniRule"/>
</dbReference>
<dbReference type="GO" id="GO:0009252">
    <property type="term" value="P:peptidoglycan biosynthetic process"/>
    <property type="evidence" value="ECO:0007669"/>
    <property type="project" value="UniProtKB-UniRule"/>
</dbReference>
<dbReference type="GO" id="GO:0008360">
    <property type="term" value="P:regulation of cell shape"/>
    <property type="evidence" value="ECO:0007669"/>
    <property type="project" value="UniProtKB-KW"/>
</dbReference>
<dbReference type="GO" id="GO:0006048">
    <property type="term" value="P:UDP-N-acetylglucosamine biosynthetic process"/>
    <property type="evidence" value="ECO:0007669"/>
    <property type="project" value="UniProtKB-UniPathway"/>
</dbReference>
<dbReference type="CDD" id="cd02540">
    <property type="entry name" value="GT2_GlmU_N_bac"/>
    <property type="match status" value="1"/>
</dbReference>
<dbReference type="CDD" id="cd03353">
    <property type="entry name" value="LbH_GlmU_C"/>
    <property type="match status" value="1"/>
</dbReference>
<dbReference type="Gene3D" id="2.160.10.10">
    <property type="entry name" value="Hexapeptide repeat proteins"/>
    <property type="match status" value="1"/>
</dbReference>
<dbReference type="Gene3D" id="3.90.550.10">
    <property type="entry name" value="Spore Coat Polysaccharide Biosynthesis Protein SpsA, Chain A"/>
    <property type="match status" value="1"/>
</dbReference>
<dbReference type="HAMAP" id="MF_01631">
    <property type="entry name" value="GlmU"/>
    <property type="match status" value="1"/>
</dbReference>
<dbReference type="InterPro" id="IPR005882">
    <property type="entry name" value="Bifunctional_GlmU"/>
</dbReference>
<dbReference type="InterPro" id="IPR050065">
    <property type="entry name" value="GlmU-like"/>
</dbReference>
<dbReference type="InterPro" id="IPR038009">
    <property type="entry name" value="GlmU_C_LbH"/>
</dbReference>
<dbReference type="InterPro" id="IPR001451">
    <property type="entry name" value="Hexapep"/>
</dbReference>
<dbReference type="InterPro" id="IPR025877">
    <property type="entry name" value="MobA-like_NTP_Trfase"/>
</dbReference>
<dbReference type="InterPro" id="IPR029044">
    <property type="entry name" value="Nucleotide-diphossugar_trans"/>
</dbReference>
<dbReference type="InterPro" id="IPR011004">
    <property type="entry name" value="Trimer_LpxA-like_sf"/>
</dbReference>
<dbReference type="NCBIfam" id="TIGR01173">
    <property type="entry name" value="glmU"/>
    <property type="match status" value="1"/>
</dbReference>
<dbReference type="PANTHER" id="PTHR43584:SF3">
    <property type="entry name" value="BIFUNCTIONAL PROTEIN GLMU"/>
    <property type="match status" value="1"/>
</dbReference>
<dbReference type="PANTHER" id="PTHR43584">
    <property type="entry name" value="NUCLEOTIDYL TRANSFERASE"/>
    <property type="match status" value="1"/>
</dbReference>
<dbReference type="Pfam" id="PF00132">
    <property type="entry name" value="Hexapep"/>
    <property type="match status" value="1"/>
</dbReference>
<dbReference type="Pfam" id="PF12804">
    <property type="entry name" value="NTP_transf_3"/>
    <property type="match status" value="1"/>
</dbReference>
<dbReference type="SUPFAM" id="SSF53448">
    <property type="entry name" value="Nucleotide-diphospho-sugar transferases"/>
    <property type="match status" value="1"/>
</dbReference>
<dbReference type="SUPFAM" id="SSF51161">
    <property type="entry name" value="Trimeric LpxA-like enzymes"/>
    <property type="match status" value="1"/>
</dbReference>
<name>GLMU_HYDCU</name>
<organism>
    <name type="scientific">Hydrogenovibrio crunogenus (strain DSM 25203 / XCL-2)</name>
    <name type="common">Thiomicrospira crunogena</name>
    <dbReference type="NCBI Taxonomy" id="317025"/>
    <lineage>
        <taxon>Bacteria</taxon>
        <taxon>Pseudomonadati</taxon>
        <taxon>Pseudomonadota</taxon>
        <taxon>Gammaproteobacteria</taxon>
        <taxon>Thiotrichales</taxon>
        <taxon>Piscirickettsiaceae</taxon>
        <taxon>Hydrogenovibrio</taxon>
    </lineage>
</organism>
<protein>
    <recommendedName>
        <fullName evidence="1">Bifunctional protein GlmU</fullName>
    </recommendedName>
    <domain>
        <recommendedName>
            <fullName evidence="1">UDP-N-acetylglucosamine pyrophosphorylase</fullName>
            <ecNumber evidence="1">2.7.7.23</ecNumber>
        </recommendedName>
        <alternativeName>
            <fullName evidence="1">N-acetylglucosamine-1-phosphate uridyltransferase</fullName>
        </alternativeName>
    </domain>
    <domain>
        <recommendedName>
            <fullName evidence="1">Glucosamine-1-phosphate N-acetyltransferase</fullName>
            <ecNumber evidence="1">2.3.1.157</ecNumber>
        </recommendedName>
    </domain>
</protein>
<feature type="chain" id="PRO_0000244317" description="Bifunctional protein GlmU">
    <location>
        <begin position="1"/>
        <end position="454"/>
    </location>
</feature>
<feature type="region of interest" description="Pyrophosphorylase" evidence="1">
    <location>
        <begin position="1"/>
        <end position="228"/>
    </location>
</feature>
<feature type="region of interest" description="Linker" evidence="1">
    <location>
        <begin position="229"/>
        <end position="249"/>
    </location>
</feature>
<feature type="region of interest" description="N-acetyltransferase" evidence="1">
    <location>
        <begin position="250"/>
        <end position="454"/>
    </location>
</feature>
<feature type="active site" description="Proton acceptor" evidence="1">
    <location>
        <position position="362"/>
    </location>
</feature>
<feature type="binding site" evidence="1">
    <location>
        <begin position="8"/>
        <end position="11"/>
    </location>
    <ligand>
        <name>UDP-N-acetyl-alpha-D-glucosamine</name>
        <dbReference type="ChEBI" id="CHEBI:57705"/>
    </ligand>
</feature>
<feature type="binding site" evidence="1">
    <location>
        <position position="22"/>
    </location>
    <ligand>
        <name>UDP-N-acetyl-alpha-D-glucosamine</name>
        <dbReference type="ChEBI" id="CHEBI:57705"/>
    </ligand>
</feature>
<feature type="binding site" evidence="1">
    <location>
        <position position="73"/>
    </location>
    <ligand>
        <name>UDP-N-acetyl-alpha-D-glucosamine</name>
        <dbReference type="ChEBI" id="CHEBI:57705"/>
    </ligand>
</feature>
<feature type="binding site" evidence="1">
    <location>
        <begin position="78"/>
        <end position="79"/>
    </location>
    <ligand>
        <name>UDP-N-acetyl-alpha-D-glucosamine</name>
        <dbReference type="ChEBI" id="CHEBI:57705"/>
    </ligand>
</feature>
<feature type="binding site" evidence="1">
    <location>
        <begin position="100"/>
        <end position="102"/>
    </location>
    <ligand>
        <name>UDP-N-acetyl-alpha-D-glucosamine</name>
        <dbReference type="ChEBI" id="CHEBI:57705"/>
    </ligand>
</feature>
<feature type="binding site" evidence="1">
    <location>
        <position position="102"/>
    </location>
    <ligand>
        <name>Mg(2+)</name>
        <dbReference type="ChEBI" id="CHEBI:18420"/>
    </ligand>
</feature>
<feature type="binding site" evidence="1">
    <location>
        <position position="138"/>
    </location>
    <ligand>
        <name>UDP-N-acetyl-alpha-D-glucosamine</name>
        <dbReference type="ChEBI" id="CHEBI:57705"/>
    </ligand>
</feature>
<feature type="binding site" evidence="1">
    <location>
        <position position="153"/>
    </location>
    <ligand>
        <name>UDP-N-acetyl-alpha-D-glucosamine</name>
        <dbReference type="ChEBI" id="CHEBI:57705"/>
    </ligand>
</feature>
<feature type="binding site" evidence="1">
    <location>
        <position position="168"/>
    </location>
    <ligand>
        <name>UDP-N-acetyl-alpha-D-glucosamine</name>
        <dbReference type="ChEBI" id="CHEBI:57705"/>
    </ligand>
</feature>
<feature type="binding site" evidence="1">
    <location>
        <position position="226"/>
    </location>
    <ligand>
        <name>Mg(2+)</name>
        <dbReference type="ChEBI" id="CHEBI:18420"/>
    </ligand>
</feature>
<feature type="binding site" evidence="1">
    <location>
        <position position="226"/>
    </location>
    <ligand>
        <name>UDP-N-acetyl-alpha-D-glucosamine</name>
        <dbReference type="ChEBI" id="CHEBI:57705"/>
    </ligand>
</feature>
<feature type="binding site" evidence="1">
    <location>
        <position position="332"/>
    </location>
    <ligand>
        <name>UDP-N-acetyl-alpha-D-glucosamine</name>
        <dbReference type="ChEBI" id="CHEBI:57705"/>
    </ligand>
</feature>
<feature type="binding site" evidence="1">
    <location>
        <position position="350"/>
    </location>
    <ligand>
        <name>UDP-N-acetyl-alpha-D-glucosamine</name>
        <dbReference type="ChEBI" id="CHEBI:57705"/>
    </ligand>
</feature>
<feature type="binding site" evidence="1">
    <location>
        <position position="365"/>
    </location>
    <ligand>
        <name>UDP-N-acetyl-alpha-D-glucosamine</name>
        <dbReference type="ChEBI" id="CHEBI:57705"/>
    </ligand>
</feature>
<feature type="binding site" evidence="1">
    <location>
        <position position="376"/>
    </location>
    <ligand>
        <name>UDP-N-acetyl-alpha-D-glucosamine</name>
        <dbReference type="ChEBI" id="CHEBI:57705"/>
    </ligand>
</feature>
<feature type="binding site" evidence="1">
    <location>
        <position position="379"/>
    </location>
    <ligand>
        <name>acetyl-CoA</name>
        <dbReference type="ChEBI" id="CHEBI:57288"/>
    </ligand>
</feature>
<feature type="binding site" evidence="1">
    <location>
        <begin position="385"/>
        <end position="386"/>
    </location>
    <ligand>
        <name>acetyl-CoA</name>
        <dbReference type="ChEBI" id="CHEBI:57288"/>
    </ligand>
</feature>
<feature type="binding site" evidence="1">
    <location>
        <position position="404"/>
    </location>
    <ligand>
        <name>acetyl-CoA</name>
        <dbReference type="ChEBI" id="CHEBI:57288"/>
    </ligand>
</feature>
<feature type="binding site" evidence="1">
    <location>
        <position position="422"/>
    </location>
    <ligand>
        <name>acetyl-CoA</name>
        <dbReference type="ChEBI" id="CHEBI:57288"/>
    </ligand>
</feature>
<feature type="binding site" evidence="1">
    <location>
        <position position="439"/>
    </location>
    <ligand>
        <name>acetyl-CoA</name>
        <dbReference type="ChEBI" id="CHEBI:57288"/>
    </ligand>
</feature>
<proteinExistence type="inferred from homology"/>
<keyword id="KW-0012">Acyltransferase</keyword>
<keyword id="KW-0133">Cell shape</keyword>
<keyword id="KW-0961">Cell wall biogenesis/degradation</keyword>
<keyword id="KW-0963">Cytoplasm</keyword>
<keyword id="KW-0460">Magnesium</keyword>
<keyword id="KW-0479">Metal-binding</keyword>
<keyword id="KW-0511">Multifunctional enzyme</keyword>
<keyword id="KW-0548">Nucleotidyltransferase</keyword>
<keyword id="KW-0573">Peptidoglycan synthesis</keyword>
<keyword id="KW-0677">Repeat</keyword>
<keyword id="KW-0808">Transferase</keyword>